<name>SMG_COLP3</name>
<proteinExistence type="inferred from homology"/>
<organism>
    <name type="scientific">Colwellia psychrerythraea (strain 34H / ATCC BAA-681)</name>
    <name type="common">Vibrio psychroerythus</name>
    <dbReference type="NCBI Taxonomy" id="167879"/>
    <lineage>
        <taxon>Bacteria</taxon>
        <taxon>Pseudomonadati</taxon>
        <taxon>Pseudomonadota</taxon>
        <taxon>Gammaproteobacteria</taxon>
        <taxon>Alteromonadales</taxon>
        <taxon>Colwelliaceae</taxon>
        <taxon>Colwellia</taxon>
    </lineage>
</organism>
<accession>Q48AU5</accession>
<feature type="chain" id="PRO_1000025647" description="Protein Smg homolog">
    <location>
        <begin position="1"/>
        <end position="157"/>
    </location>
</feature>
<gene>
    <name evidence="1" type="primary">smg</name>
    <name type="ordered locus">CPS_0023</name>
</gene>
<protein>
    <recommendedName>
        <fullName evidence="1">Protein Smg homolog</fullName>
    </recommendedName>
</protein>
<comment type="similarity">
    <text evidence="1">Belongs to the Smg family.</text>
</comment>
<sequence length="157" mass="18527">MFDILMYLFETYIQNESEAMVDHELLTDELTRAGFHQDEIYKALNWLEKLTALQDTDAYPYLTRVGSKSVRIYTSEEMQLLDTPSRGFILFLEQVNVLDFTTREMVIDRVMELDTKYFSMDDLKWVILMVLFNVPGKESAYSQLEDLIFEEQEGPLH</sequence>
<reference key="1">
    <citation type="journal article" date="2005" name="Proc. Natl. Acad. Sci. U.S.A.">
        <title>The psychrophilic lifestyle as revealed by the genome sequence of Colwellia psychrerythraea 34H through genomic and proteomic analyses.</title>
        <authorList>
            <person name="Methe B.A."/>
            <person name="Nelson K.E."/>
            <person name="Deming J.W."/>
            <person name="Momen B."/>
            <person name="Melamud E."/>
            <person name="Zhang X."/>
            <person name="Moult J."/>
            <person name="Madupu R."/>
            <person name="Nelson W.C."/>
            <person name="Dodson R.J."/>
            <person name="Brinkac L.M."/>
            <person name="Daugherty S.C."/>
            <person name="Durkin A.S."/>
            <person name="DeBoy R.T."/>
            <person name="Kolonay J.F."/>
            <person name="Sullivan S.A."/>
            <person name="Zhou L."/>
            <person name="Davidsen T.M."/>
            <person name="Wu M."/>
            <person name="Huston A.L."/>
            <person name="Lewis M."/>
            <person name="Weaver B."/>
            <person name="Weidman J.F."/>
            <person name="Khouri H."/>
            <person name="Utterback T.R."/>
            <person name="Feldblyum T.V."/>
            <person name="Fraser C.M."/>
        </authorList>
    </citation>
    <scope>NUCLEOTIDE SEQUENCE [LARGE SCALE GENOMIC DNA]</scope>
    <source>
        <strain>34H / ATCC BAA-681</strain>
    </source>
</reference>
<evidence type="ECO:0000255" key="1">
    <source>
        <dbReference type="HAMAP-Rule" id="MF_00598"/>
    </source>
</evidence>
<dbReference type="EMBL" id="CP000083">
    <property type="protein sequence ID" value="AAZ28481.1"/>
    <property type="molecule type" value="Genomic_DNA"/>
</dbReference>
<dbReference type="RefSeq" id="WP_011040913.1">
    <property type="nucleotide sequence ID" value="NC_003910.7"/>
</dbReference>
<dbReference type="SMR" id="Q48AU5"/>
<dbReference type="STRING" id="167879.CPS_0023"/>
<dbReference type="DNASU" id="3522741"/>
<dbReference type="KEGG" id="cps:CPS_0023"/>
<dbReference type="eggNOG" id="COG2922">
    <property type="taxonomic scope" value="Bacteria"/>
</dbReference>
<dbReference type="HOGENOM" id="CLU_133242_0_0_6"/>
<dbReference type="Proteomes" id="UP000000547">
    <property type="component" value="Chromosome"/>
</dbReference>
<dbReference type="HAMAP" id="MF_00598">
    <property type="entry name" value="Smg"/>
    <property type="match status" value="1"/>
</dbReference>
<dbReference type="InterPro" id="IPR007456">
    <property type="entry name" value="Smg"/>
</dbReference>
<dbReference type="NCBIfam" id="NF002897">
    <property type="entry name" value="PRK03430.1"/>
    <property type="match status" value="1"/>
</dbReference>
<dbReference type="PANTHER" id="PTHR38692">
    <property type="entry name" value="PROTEIN SMG"/>
    <property type="match status" value="1"/>
</dbReference>
<dbReference type="PANTHER" id="PTHR38692:SF1">
    <property type="entry name" value="PROTEIN SMG"/>
    <property type="match status" value="1"/>
</dbReference>
<dbReference type="Pfam" id="PF04361">
    <property type="entry name" value="DUF494"/>
    <property type="match status" value="1"/>
</dbReference>